<gene>
    <name evidence="1" type="primary">adk</name>
    <name type="ordered locus">BPSL0875</name>
</gene>
<evidence type="ECO:0000255" key="1">
    <source>
        <dbReference type="HAMAP-Rule" id="MF_00235"/>
    </source>
</evidence>
<name>KAD_BURPS</name>
<accession>Q63WL6</accession>
<dbReference type="EC" id="2.7.4.3" evidence="1"/>
<dbReference type="EMBL" id="BX571965">
    <property type="protein sequence ID" value="CAH34867.1"/>
    <property type="molecule type" value="Genomic_DNA"/>
</dbReference>
<dbReference type="RefSeq" id="WP_004185840.1">
    <property type="nucleotide sequence ID" value="NZ_CP009538.1"/>
</dbReference>
<dbReference type="RefSeq" id="YP_107500.1">
    <property type="nucleotide sequence ID" value="NC_006350.1"/>
</dbReference>
<dbReference type="SMR" id="Q63WL6"/>
<dbReference type="STRING" id="272560.BPSL0875"/>
<dbReference type="GeneID" id="93059382"/>
<dbReference type="KEGG" id="bps:BPSL0875"/>
<dbReference type="PATRIC" id="fig|272560.51.peg.721"/>
<dbReference type="eggNOG" id="COG0563">
    <property type="taxonomic scope" value="Bacteria"/>
</dbReference>
<dbReference type="UniPathway" id="UPA00588">
    <property type="reaction ID" value="UER00649"/>
</dbReference>
<dbReference type="Proteomes" id="UP000000605">
    <property type="component" value="Chromosome 1"/>
</dbReference>
<dbReference type="GO" id="GO:0005737">
    <property type="term" value="C:cytoplasm"/>
    <property type="evidence" value="ECO:0007669"/>
    <property type="project" value="UniProtKB-SubCell"/>
</dbReference>
<dbReference type="GO" id="GO:0004017">
    <property type="term" value="F:adenylate kinase activity"/>
    <property type="evidence" value="ECO:0007669"/>
    <property type="project" value="UniProtKB-UniRule"/>
</dbReference>
<dbReference type="GO" id="GO:0005524">
    <property type="term" value="F:ATP binding"/>
    <property type="evidence" value="ECO:0007669"/>
    <property type="project" value="UniProtKB-UniRule"/>
</dbReference>
<dbReference type="GO" id="GO:0044209">
    <property type="term" value="P:AMP salvage"/>
    <property type="evidence" value="ECO:0007669"/>
    <property type="project" value="UniProtKB-UniRule"/>
</dbReference>
<dbReference type="CDD" id="cd01428">
    <property type="entry name" value="ADK"/>
    <property type="match status" value="1"/>
</dbReference>
<dbReference type="FunFam" id="3.40.50.300:FF:000106">
    <property type="entry name" value="Adenylate kinase mitochondrial"/>
    <property type="match status" value="1"/>
</dbReference>
<dbReference type="Gene3D" id="3.40.50.300">
    <property type="entry name" value="P-loop containing nucleotide triphosphate hydrolases"/>
    <property type="match status" value="1"/>
</dbReference>
<dbReference type="HAMAP" id="MF_00235">
    <property type="entry name" value="Adenylate_kinase_Adk"/>
    <property type="match status" value="1"/>
</dbReference>
<dbReference type="InterPro" id="IPR006259">
    <property type="entry name" value="Adenyl_kin_sub"/>
</dbReference>
<dbReference type="InterPro" id="IPR000850">
    <property type="entry name" value="Adenylat/UMP-CMP_kin"/>
</dbReference>
<dbReference type="InterPro" id="IPR033690">
    <property type="entry name" value="Adenylat_kinase_CS"/>
</dbReference>
<dbReference type="InterPro" id="IPR007862">
    <property type="entry name" value="Adenylate_kinase_lid-dom"/>
</dbReference>
<dbReference type="InterPro" id="IPR027417">
    <property type="entry name" value="P-loop_NTPase"/>
</dbReference>
<dbReference type="NCBIfam" id="TIGR01351">
    <property type="entry name" value="adk"/>
    <property type="match status" value="1"/>
</dbReference>
<dbReference type="NCBIfam" id="NF001379">
    <property type="entry name" value="PRK00279.1-1"/>
    <property type="match status" value="1"/>
</dbReference>
<dbReference type="NCBIfam" id="NF001380">
    <property type="entry name" value="PRK00279.1-2"/>
    <property type="match status" value="1"/>
</dbReference>
<dbReference type="NCBIfam" id="NF001381">
    <property type="entry name" value="PRK00279.1-3"/>
    <property type="match status" value="1"/>
</dbReference>
<dbReference type="NCBIfam" id="NF011100">
    <property type="entry name" value="PRK14527.1"/>
    <property type="match status" value="1"/>
</dbReference>
<dbReference type="PANTHER" id="PTHR23359">
    <property type="entry name" value="NUCLEOTIDE KINASE"/>
    <property type="match status" value="1"/>
</dbReference>
<dbReference type="Pfam" id="PF00406">
    <property type="entry name" value="ADK"/>
    <property type="match status" value="1"/>
</dbReference>
<dbReference type="Pfam" id="PF05191">
    <property type="entry name" value="ADK_lid"/>
    <property type="match status" value="1"/>
</dbReference>
<dbReference type="PRINTS" id="PR00094">
    <property type="entry name" value="ADENYLTKNASE"/>
</dbReference>
<dbReference type="SUPFAM" id="SSF52540">
    <property type="entry name" value="P-loop containing nucleoside triphosphate hydrolases"/>
    <property type="match status" value="1"/>
</dbReference>
<dbReference type="PROSITE" id="PS00113">
    <property type="entry name" value="ADENYLATE_KINASE"/>
    <property type="match status" value="1"/>
</dbReference>
<proteinExistence type="inferred from homology"/>
<keyword id="KW-0067">ATP-binding</keyword>
<keyword id="KW-0963">Cytoplasm</keyword>
<keyword id="KW-0418">Kinase</keyword>
<keyword id="KW-0545">Nucleotide biosynthesis</keyword>
<keyword id="KW-0547">Nucleotide-binding</keyword>
<keyword id="KW-1185">Reference proteome</keyword>
<keyword id="KW-0808">Transferase</keyword>
<protein>
    <recommendedName>
        <fullName evidence="1">Adenylate kinase</fullName>
        <shortName evidence="1">AK</shortName>
        <ecNumber evidence="1">2.7.4.3</ecNumber>
    </recommendedName>
    <alternativeName>
        <fullName evidence="1">ATP-AMP transphosphorylase</fullName>
    </alternativeName>
    <alternativeName>
        <fullName evidence="1">ATP:AMP phosphotransferase</fullName>
    </alternativeName>
    <alternativeName>
        <fullName evidence="1">Adenylate monophosphate kinase</fullName>
    </alternativeName>
</protein>
<sequence length="220" mass="24170">MRLILLGAPGAGKGTQANFIKEKFGIPQISTGDMLRAAVKAGTPLGVEAKTYMDEGKLVPDSLIIGLVKERLKEADCANGYLFDGFPRTIAQADAMKEAGVAIDYVLEIDVPFSEIIERMSGRRTHPASGRTYHVKFNPPKVEGKDDVTGEPLVQRDDDKEETVKKRLDVYEAQTKPLITYYGDWARRGAENGLKAPAYRKISGLGAVEEIRARVFDALK</sequence>
<organism>
    <name type="scientific">Burkholderia pseudomallei (strain K96243)</name>
    <dbReference type="NCBI Taxonomy" id="272560"/>
    <lineage>
        <taxon>Bacteria</taxon>
        <taxon>Pseudomonadati</taxon>
        <taxon>Pseudomonadota</taxon>
        <taxon>Betaproteobacteria</taxon>
        <taxon>Burkholderiales</taxon>
        <taxon>Burkholderiaceae</taxon>
        <taxon>Burkholderia</taxon>
        <taxon>pseudomallei group</taxon>
    </lineage>
</organism>
<reference key="1">
    <citation type="journal article" date="2004" name="Proc. Natl. Acad. Sci. U.S.A.">
        <title>Genomic plasticity of the causative agent of melioidosis, Burkholderia pseudomallei.</title>
        <authorList>
            <person name="Holden M.T.G."/>
            <person name="Titball R.W."/>
            <person name="Peacock S.J."/>
            <person name="Cerdeno-Tarraga A.-M."/>
            <person name="Atkins T."/>
            <person name="Crossman L.C."/>
            <person name="Pitt T."/>
            <person name="Churcher C."/>
            <person name="Mungall K.L."/>
            <person name="Bentley S.D."/>
            <person name="Sebaihia M."/>
            <person name="Thomson N.R."/>
            <person name="Bason N."/>
            <person name="Beacham I.R."/>
            <person name="Brooks K."/>
            <person name="Brown K.A."/>
            <person name="Brown N.F."/>
            <person name="Challis G.L."/>
            <person name="Cherevach I."/>
            <person name="Chillingworth T."/>
            <person name="Cronin A."/>
            <person name="Crossett B."/>
            <person name="Davis P."/>
            <person name="DeShazer D."/>
            <person name="Feltwell T."/>
            <person name="Fraser A."/>
            <person name="Hance Z."/>
            <person name="Hauser H."/>
            <person name="Holroyd S."/>
            <person name="Jagels K."/>
            <person name="Keith K.E."/>
            <person name="Maddison M."/>
            <person name="Moule S."/>
            <person name="Price C."/>
            <person name="Quail M.A."/>
            <person name="Rabbinowitsch E."/>
            <person name="Rutherford K."/>
            <person name="Sanders M."/>
            <person name="Simmonds M."/>
            <person name="Songsivilai S."/>
            <person name="Stevens K."/>
            <person name="Tumapa S."/>
            <person name="Vesaratchavest M."/>
            <person name="Whitehead S."/>
            <person name="Yeats C."/>
            <person name="Barrell B.G."/>
            <person name="Oyston P.C.F."/>
            <person name="Parkhill J."/>
        </authorList>
    </citation>
    <scope>NUCLEOTIDE SEQUENCE [LARGE SCALE GENOMIC DNA]</scope>
    <source>
        <strain>K96243</strain>
    </source>
</reference>
<feature type="chain" id="PRO_0000158747" description="Adenylate kinase">
    <location>
        <begin position="1"/>
        <end position="220"/>
    </location>
</feature>
<feature type="region of interest" description="NMP" evidence="1">
    <location>
        <begin position="30"/>
        <end position="59"/>
    </location>
</feature>
<feature type="region of interest" description="LID" evidence="1">
    <location>
        <begin position="122"/>
        <end position="159"/>
    </location>
</feature>
<feature type="binding site" evidence="1">
    <location>
        <begin position="10"/>
        <end position="15"/>
    </location>
    <ligand>
        <name>ATP</name>
        <dbReference type="ChEBI" id="CHEBI:30616"/>
    </ligand>
</feature>
<feature type="binding site" evidence="1">
    <location>
        <position position="31"/>
    </location>
    <ligand>
        <name>AMP</name>
        <dbReference type="ChEBI" id="CHEBI:456215"/>
    </ligand>
</feature>
<feature type="binding site" evidence="1">
    <location>
        <position position="36"/>
    </location>
    <ligand>
        <name>AMP</name>
        <dbReference type="ChEBI" id="CHEBI:456215"/>
    </ligand>
</feature>
<feature type="binding site" evidence="1">
    <location>
        <begin position="57"/>
        <end position="59"/>
    </location>
    <ligand>
        <name>AMP</name>
        <dbReference type="ChEBI" id="CHEBI:456215"/>
    </ligand>
</feature>
<feature type="binding site" evidence="1">
    <location>
        <begin position="85"/>
        <end position="88"/>
    </location>
    <ligand>
        <name>AMP</name>
        <dbReference type="ChEBI" id="CHEBI:456215"/>
    </ligand>
</feature>
<feature type="binding site" evidence="1">
    <location>
        <position position="92"/>
    </location>
    <ligand>
        <name>AMP</name>
        <dbReference type="ChEBI" id="CHEBI:456215"/>
    </ligand>
</feature>
<feature type="binding site" evidence="1">
    <location>
        <position position="123"/>
    </location>
    <ligand>
        <name>ATP</name>
        <dbReference type="ChEBI" id="CHEBI:30616"/>
    </ligand>
</feature>
<feature type="binding site" evidence="1">
    <location>
        <begin position="132"/>
        <end position="133"/>
    </location>
    <ligand>
        <name>ATP</name>
        <dbReference type="ChEBI" id="CHEBI:30616"/>
    </ligand>
</feature>
<feature type="binding site" evidence="1">
    <location>
        <position position="156"/>
    </location>
    <ligand>
        <name>AMP</name>
        <dbReference type="ChEBI" id="CHEBI:456215"/>
    </ligand>
</feature>
<feature type="binding site" evidence="1">
    <location>
        <position position="167"/>
    </location>
    <ligand>
        <name>AMP</name>
        <dbReference type="ChEBI" id="CHEBI:456215"/>
    </ligand>
</feature>
<feature type="binding site" evidence="1">
    <location>
        <position position="206"/>
    </location>
    <ligand>
        <name>ATP</name>
        <dbReference type="ChEBI" id="CHEBI:30616"/>
    </ligand>
</feature>
<comment type="function">
    <text evidence="1">Catalyzes the reversible transfer of the terminal phosphate group between ATP and AMP. Plays an important role in cellular energy homeostasis and in adenine nucleotide metabolism.</text>
</comment>
<comment type="catalytic activity">
    <reaction evidence="1">
        <text>AMP + ATP = 2 ADP</text>
        <dbReference type="Rhea" id="RHEA:12973"/>
        <dbReference type="ChEBI" id="CHEBI:30616"/>
        <dbReference type="ChEBI" id="CHEBI:456215"/>
        <dbReference type="ChEBI" id="CHEBI:456216"/>
        <dbReference type="EC" id="2.7.4.3"/>
    </reaction>
</comment>
<comment type="pathway">
    <text evidence="1">Purine metabolism; AMP biosynthesis via salvage pathway; AMP from ADP: step 1/1.</text>
</comment>
<comment type="subunit">
    <text evidence="1">Monomer.</text>
</comment>
<comment type="subcellular location">
    <subcellularLocation>
        <location evidence="1">Cytoplasm</location>
    </subcellularLocation>
</comment>
<comment type="domain">
    <text evidence="1">Consists of three domains, a large central CORE domain and two small peripheral domains, NMPbind and LID, which undergo movements during catalysis. The LID domain closes over the site of phosphoryl transfer upon ATP binding. Assembling and dissambling the active center during each catalytic cycle provides an effective means to prevent ATP hydrolysis.</text>
</comment>
<comment type="similarity">
    <text evidence="1">Belongs to the adenylate kinase family.</text>
</comment>